<keyword id="KW-0963">Cytoplasm</keyword>
<keyword id="KW-0489">Methyltransferase</keyword>
<keyword id="KW-0698">rRNA processing</keyword>
<keyword id="KW-0949">S-adenosyl-L-methionine</keyword>
<keyword id="KW-0808">Transferase</keyword>
<dbReference type="EC" id="2.1.1.-" evidence="1"/>
<dbReference type="EMBL" id="CP001341">
    <property type="protein sequence ID" value="ACL41884.1"/>
    <property type="molecule type" value="Genomic_DNA"/>
</dbReference>
<dbReference type="RefSeq" id="WP_015939076.1">
    <property type="nucleotide sequence ID" value="NC_011886.1"/>
</dbReference>
<dbReference type="SMR" id="B8H8Y9"/>
<dbReference type="STRING" id="452863.Achl_3932"/>
<dbReference type="KEGG" id="ach:Achl_3932"/>
<dbReference type="eggNOG" id="COG0357">
    <property type="taxonomic scope" value="Bacteria"/>
</dbReference>
<dbReference type="HOGENOM" id="CLU_065341_5_0_11"/>
<dbReference type="OrthoDB" id="9808773at2"/>
<dbReference type="Proteomes" id="UP000002505">
    <property type="component" value="Chromosome"/>
</dbReference>
<dbReference type="GO" id="GO:0005829">
    <property type="term" value="C:cytosol"/>
    <property type="evidence" value="ECO:0007669"/>
    <property type="project" value="TreeGrafter"/>
</dbReference>
<dbReference type="GO" id="GO:0070043">
    <property type="term" value="F:rRNA (guanine-N7-)-methyltransferase activity"/>
    <property type="evidence" value="ECO:0007669"/>
    <property type="project" value="UniProtKB-UniRule"/>
</dbReference>
<dbReference type="Gene3D" id="3.40.50.150">
    <property type="entry name" value="Vaccinia Virus protein VP39"/>
    <property type="match status" value="1"/>
</dbReference>
<dbReference type="HAMAP" id="MF_00074">
    <property type="entry name" value="16SrRNA_methyltr_G"/>
    <property type="match status" value="1"/>
</dbReference>
<dbReference type="InterPro" id="IPR003682">
    <property type="entry name" value="rRNA_ssu_MeTfrase_G"/>
</dbReference>
<dbReference type="InterPro" id="IPR029063">
    <property type="entry name" value="SAM-dependent_MTases_sf"/>
</dbReference>
<dbReference type="NCBIfam" id="TIGR00138">
    <property type="entry name" value="rsmG_gidB"/>
    <property type="match status" value="1"/>
</dbReference>
<dbReference type="PANTHER" id="PTHR31760">
    <property type="entry name" value="S-ADENOSYL-L-METHIONINE-DEPENDENT METHYLTRANSFERASES SUPERFAMILY PROTEIN"/>
    <property type="match status" value="1"/>
</dbReference>
<dbReference type="PANTHER" id="PTHR31760:SF0">
    <property type="entry name" value="S-ADENOSYL-L-METHIONINE-DEPENDENT METHYLTRANSFERASES SUPERFAMILY PROTEIN"/>
    <property type="match status" value="1"/>
</dbReference>
<dbReference type="Pfam" id="PF02527">
    <property type="entry name" value="GidB"/>
    <property type="match status" value="1"/>
</dbReference>
<dbReference type="SUPFAM" id="SSF53335">
    <property type="entry name" value="S-adenosyl-L-methionine-dependent methyltransferases"/>
    <property type="match status" value="1"/>
</dbReference>
<proteinExistence type="inferred from homology"/>
<organism>
    <name type="scientific">Pseudarthrobacter chlorophenolicus (strain ATCC 700700 / DSM 12829 / CIP 107037 / JCM 12360 / KCTC 9906 / NCIMB 13794 / A6)</name>
    <name type="common">Arthrobacter chlorophenolicus</name>
    <dbReference type="NCBI Taxonomy" id="452863"/>
    <lineage>
        <taxon>Bacteria</taxon>
        <taxon>Bacillati</taxon>
        <taxon>Actinomycetota</taxon>
        <taxon>Actinomycetes</taxon>
        <taxon>Micrococcales</taxon>
        <taxon>Micrococcaceae</taxon>
        <taxon>Pseudarthrobacter</taxon>
    </lineage>
</organism>
<accession>B8H8Y9</accession>
<sequence length="216" mass="23045">MVDITAAELRAAEKIFGDRLDLAKRYVEHLATSGTERGLIGPREIPRLWSRHVLNCAVIESEIPQGSRVADVGSGAGLPGLCLAIARPDLELTLIEPLERRVIWLQEVVDDLGLDNVTVMRSRAELAVGHVEADVVTARAVSALTNLAGLTIPLLGGTGEVIAIKGRSAGEEIEKAAKAIRKLGGVETSVLTVGDNLLEEPTTVVRIVVNKPQKKS</sequence>
<name>RSMG_PSECP</name>
<comment type="function">
    <text evidence="1">Specifically methylates the N7 position of guanine in position 518 of 16S rRNA.</text>
</comment>
<comment type="subcellular location">
    <subcellularLocation>
        <location evidence="1">Cytoplasm</location>
    </subcellularLocation>
</comment>
<comment type="similarity">
    <text evidence="1">Belongs to the methyltransferase superfamily. RNA methyltransferase RsmG family.</text>
</comment>
<feature type="chain" id="PRO_1000118172" description="Ribosomal RNA small subunit methyltransferase G">
    <location>
        <begin position="1"/>
        <end position="216"/>
    </location>
</feature>
<feature type="binding site" evidence="1">
    <location>
        <position position="73"/>
    </location>
    <ligand>
        <name>S-adenosyl-L-methionine</name>
        <dbReference type="ChEBI" id="CHEBI:59789"/>
    </ligand>
</feature>
<feature type="binding site" evidence="1">
    <location>
        <position position="78"/>
    </location>
    <ligand>
        <name>S-adenosyl-L-methionine</name>
        <dbReference type="ChEBI" id="CHEBI:59789"/>
    </ligand>
</feature>
<feature type="binding site" evidence="1">
    <location>
        <begin position="124"/>
        <end position="125"/>
    </location>
    <ligand>
        <name>S-adenosyl-L-methionine</name>
        <dbReference type="ChEBI" id="CHEBI:59789"/>
    </ligand>
</feature>
<feature type="binding site" evidence="1">
    <location>
        <position position="139"/>
    </location>
    <ligand>
        <name>S-adenosyl-L-methionine</name>
        <dbReference type="ChEBI" id="CHEBI:59789"/>
    </ligand>
</feature>
<evidence type="ECO:0000255" key="1">
    <source>
        <dbReference type="HAMAP-Rule" id="MF_00074"/>
    </source>
</evidence>
<gene>
    <name evidence="1" type="primary">rsmG</name>
    <name type="ordered locus">Achl_3932</name>
</gene>
<protein>
    <recommendedName>
        <fullName evidence="1">Ribosomal RNA small subunit methyltransferase G</fullName>
        <ecNumber evidence="1">2.1.1.-</ecNumber>
    </recommendedName>
    <alternativeName>
        <fullName evidence="1">16S rRNA 7-methylguanosine methyltransferase</fullName>
        <shortName evidence="1">16S rRNA m7G methyltransferase</shortName>
    </alternativeName>
</protein>
<reference key="1">
    <citation type="submission" date="2009-01" db="EMBL/GenBank/DDBJ databases">
        <title>Complete sequence of chromosome of Arthrobacter chlorophenolicus A6.</title>
        <authorList>
            <consortium name="US DOE Joint Genome Institute"/>
            <person name="Lucas S."/>
            <person name="Copeland A."/>
            <person name="Lapidus A."/>
            <person name="Glavina del Rio T."/>
            <person name="Tice H."/>
            <person name="Bruce D."/>
            <person name="Goodwin L."/>
            <person name="Pitluck S."/>
            <person name="Goltsman E."/>
            <person name="Clum A."/>
            <person name="Larimer F."/>
            <person name="Land M."/>
            <person name="Hauser L."/>
            <person name="Kyrpides N."/>
            <person name="Mikhailova N."/>
            <person name="Jansson J."/>
            <person name="Richardson P."/>
        </authorList>
    </citation>
    <scope>NUCLEOTIDE SEQUENCE [LARGE SCALE GENOMIC DNA]</scope>
    <source>
        <strain>ATCC 700700 / DSM 12829 / CIP 107037 / JCM 12360 / KCTC 9906 / NCIMB 13794 / A6</strain>
    </source>
</reference>